<name>3SOK2_NAJHA</name>
<proteinExistence type="evidence at protein level"/>
<organism>
    <name type="scientific">Naja annulifera</name>
    <name type="common">Banded Egyptian cobra</name>
    <name type="synonym">Naja haje annulifera</name>
    <dbReference type="NCBI Taxonomy" id="96794"/>
    <lineage>
        <taxon>Eukaryota</taxon>
        <taxon>Metazoa</taxon>
        <taxon>Chordata</taxon>
        <taxon>Craniata</taxon>
        <taxon>Vertebrata</taxon>
        <taxon>Euteleostomi</taxon>
        <taxon>Lepidosauria</taxon>
        <taxon>Squamata</taxon>
        <taxon>Bifurcata</taxon>
        <taxon>Unidentata</taxon>
        <taxon>Episquamata</taxon>
        <taxon>Toxicofera</taxon>
        <taxon>Serpentes</taxon>
        <taxon>Colubroidea</taxon>
        <taxon>Elapidae</taxon>
        <taxon>Elapinae</taxon>
        <taxon>Naja</taxon>
    </lineage>
</organism>
<sequence length="61" mass="6837">LECYQMSKVVTCKPEETFCYSDVFMPFRNHIVYTSGCSSYCRDGTGEKCCTTDRCNGARGG</sequence>
<dbReference type="SMR" id="P25678"/>
<dbReference type="GO" id="GO:0005576">
    <property type="term" value="C:extracellular region"/>
    <property type="evidence" value="ECO:0007669"/>
    <property type="project" value="UniProtKB-SubCell"/>
</dbReference>
<dbReference type="GO" id="GO:0090729">
    <property type="term" value="F:toxin activity"/>
    <property type="evidence" value="ECO:0007669"/>
    <property type="project" value="UniProtKB-KW"/>
</dbReference>
<dbReference type="CDD" id="cd00206">
    <property type="entry name" value="TFP_snake_toxin"/>
    <property type="match status" value="1"/>
</dbReference>
<dbReference type="Gene3D" id="2.10.60.10">
    <property type="entry name" value="CD59"/>
    <property type="match status" value="1"/>
</dbReference>
<dbReference type="InterPro" id="IPR003571">
    <property type="entry name" value="Snake_3FTx"/>
</dbReference>
<dbReference type="InterPro" id="IPR045860">
    <property type="entry name" value="Snake_toxin-like_sf"/>
</dbReference>
<dbReference type="InterPro" id="IPR054131">
    <property type="entry name" value="Toxin_cobra-type"/>
</dbReference>
<dbReference type="Pfam" id="PF21947">
    <property type="entry name" value="Toxin_cobra-type"/>
    <property type="match status" value="1"/>
</dbReference>
<dbReference type="SUPFAM" id="SSF57302">
    <property type="entry name" value="Snake toxin-like"/>
    <property type="match status" value="1"/>
</dbReference>
<protein>
    <recommendedName>
        <fullName>Weak toxin CM-2a</fullName>
    </recommendedName>
</protein>
<keyword id="KW-0903">Direct protein sequencing</keyword>
<keyword id="KW-1015">Disulfide bond</keyword>
<keyword id="KW-0964">Secreted</keyword>
<keyword id="KW-0800">Toxin</keyword>
<accession>P25678</accession>
<evidence type="ECO:0000250" key="1">
    <source>
        <dbReference type="UniProtKB" id="P60301"/>
    </source>
</evidence>
<evidence type="ECO:0000269" key="2">
    <source>
    </source>
</evidence>
<evidence type="ECO:0000305" key="3"/>
<reference key="1">
    <citation type="journal article" date="1977" name="Hoppe-Seyler's Z. Physiol. Chem.">
        <title>Snake venom toxins. The amino acid sequences of two toxins (CM-2a and CM-3) from Naja haje annulifera (Egyptian cobra) venom.</title>
        <authorList>
            <person name="Joubert F.J."/>
        </authorList>
    </citation>
    <scope>PROTEIN SEQUENCE</scope>
    <scope>TOXIC DOSE</scope>
    <scope>SUBCELLULAR LOCATION</scope>
    <source>
        <tissue>Venom</tissue>
    </source>
</reference>
<feature type="chain" id="PRO_0000093628" description="Weak toxin CM-2a" evidence="2">
    <location>
        <begin position="1"/>
        <end position="61"/>
    </location>
</feature>
<feature type="disulfide bond" evidence="1">
    <location>
        <begin position="3"/>
        <end position="19"/>
    </location>
</feature>
<feature type="disulfide bond" evidence="1">
    <location>
        <begin position="12"/>
        <end position="37"/>
    </location>
</feature>
<feature type="disulfide bond" evidence="1">
    <location>
        <begin position="41"/>
        <end position="49"/>
    </location>
</feature>
<feature type="disulfide bond" evidence="1">
    <location>
        <begin position="50"/>
        <end position="55"/>
    </location>
</feature>
<comment type="subcellular location">
    <subcellularLocation>
        <location evidence="2">Secreted</location>
    </subcellularLocation>
</comment>
<comment type="tissue specificity">
    <text evidence="3">Expressed by the venom gland.</text>
</comment>
<comment type="toxic dose">
    <text evidence="2">LD(50) is 15.4 mg/kg by intravenous injection.</text>
</comment>
<comment type="similarity">
    <text evidence="3">Belongs to the three-finger toxin family. Short-chain subfamily. Orphan group XX sub-subfamily.</text>
</comment>